<accession>P28043</accession>
<comment type="function">
    <text evidence="4">May contribute to the conjugative processing of DNA. It has a functional relationship with Psi (plasmid-mediated sos inhibition) proteins.</text>
</comment>
<comment type="subunit">
    <text evidence="2">Homotetramer.</text>
</comment>
<name>SSB2_ECOLX</name>
<reference key="1">
    <citation type="journal article" date="1991" name="Proteins">
        <title>Single-stranded DNA binding proteins (SSBs) from prokaryotic transmissible plasmids.</title>
        <authorList>
            <person name="Ruvolo P.P."/>
            <person name="Keating K.M."/>
            <person name="Williams K.R."/>
            <person name="Chase J.W."/>
        </authorList>
    </citation>
    <scope>NUCLEOTIDE SEQUENCE [GENOMIC DNA]</scope>
    <scope>FUNCTION</scope>
</reference>
<dbReference type="PIR" id="C38487">
    <property type="entry name" value="C38487"/>
</dbReference>
<dbReference type="SMR" id="P28043"/>
<dbReference type="IntAct" id="P28043">
    <property type="interactions" value="47"/>
</dbReference>
<dbReference type="GO" id="GO:0009295">
    <property type="term" value="C:nucleoid"/>
    <property type="evidence" value="ECO:0007669"/>
    <property type="project" value="TreeGrafter"/>
</dbReference>
<dbReference type="GO" id="GO:0003697">
    <property type="term" value="F:single-stranded DNA binding"/>
    <property type="evidence" value="ECO:0007669"/>
    <property type="project" value="UniProtKB-UniRule"/>
</dbReference>
<dbReference type="GO" id="GO:0006260">
    <property type="term" value="P:DNA replication"/>
    <property type="evidence" value="ECO:0007669"/>
    <property type="project" value="UniProtKB-KW"/>
</dbReference>
<dbReference type="CDD" id="cd04496">
    <property type="entry name" value="SSB_OBF"/>
    <property type="match status" value="1"/>
</dbReference>
<dbReference type="Gene3D" id="2.40.50.140">
    <property type="entry name" value="Nucleic acid-binding proteins"/>
    <property type="match status" value="1"/>
</dbReference>
<dbReference type="HAMAP" id="MF_00984">
    <property type="entry name" value="SSB"/>
    <property type="match status" value="1"/>
</dbReference>
<dbReference type="InterPro" id="IPR012340">
    <property type="entry name" value="NA-bd_OB-fold"/>
</dbReference>
<dbReference type="InterPro" id="IPR000424">
    <property type="entry name" value="Primosome_PriB/ssb"/>
</dbReference>
<dbReference type="InterPro" id="IPR011344">
    <property type="entry name" value="ssDNA-bd"/>
</dbReference>
<dbReference type="NCBIfam" id="NF010292">
    <property type="entry name" value="PRK13732.1"/>
    <property type="match status" value="1"/>
</dbReference>
<dbReference type="NCBIfam" id="TIGR00621">
    <property type="entry name" value="ssb"/>
    <property type="match status" value="1"/>
</dbReference>
<dbReference type="PANTHER" id="PTHR10302">
    <property type="entry name" value="SINGLE-STRANDED DNA-BINDING PROTEIN"/>
    <property type="match status" value="1"/>
</dbReference>
<dbReference type="PANTHER" id="PTHR10302:SF27">
    <property type="entry name" value="SINGLE-STRANDED DNA-BINDING PROTEIN"/>
    <property type="match status" value="1"/>
</dbReference>
<dbReference type="Pfam" id="PF00436">
    <property type="entry name" value="SSB"/>
    <property type="match status" value="1"/>
</dbReference>
<dbReference type="SUPFAM" id="SSF50249">
    <property type="entry name" value="Nucleic acid-binding proteins"/>
    <property type="match status" value="1"/>
</dbReference>
<dbReference type="PROSITE" id="PS50935">
    <property type="entry name" value="SSB"/>
    <property type="match status" value="1"/>
</dbReference>
<organism>
    <name type="scientific">Escherichia coli</name>
    <dbReference type="NCBI Taxonomy" id="562"/>
    <lineage>
        <taxon>Bacteria</taxon>
        <taxon>Pseudomonadati</taxon>
        <taxon>Pseudomonadota</taxon>
        <taxon>Gammaproteobacteria</taxon>
        <taxon>Enterobacterales</taxon>
        <taxon>Enterobacteriaceae</taxon>
        <taxon>Escherichia</taxon>
    </lineage>
</organism>
<keyword id="KW-0235">DNA replication</keyword>
<keyword id="KW-0238">DNA-binding</keyword>
<keyword id="KW-0614">Plasmid</keyword>
<sequence length="179" mass="19741">MAVRGINKVILVGRLGKDPEVRYIPNGGAVANLQVATSETWRDKQTGKMREQTEWHRVVLFGKLAEVAGEYLRKGAQVYIEGQLRTRSWEDNGITRYVTEILVKTTGTMQMLGRAAGAQTQPEEGQQFSAQPQPEPQSEAGTKKGGAKTKGRGRKVAQPEPQLQPPEGDDYGFSDDIPF</sequence>
<protein>
    <recommendedName>
        <fullName>Plasmid-derived single-stranded DNA-binding protein</fullName>
        <shortName evidence="2">SSB</shortName>
    </recommendedName>
    <alternativeName>
        <fullName>Helix-destabilizing protein</fullName>
    </alternativeName>
</protein>
<gene>
    <name type="primary">ssb</name>
</gene>
<proteinExistence type="inferred from homology"/>
<evidence type="ECO:0000250" key="1"/>
<evidence type="ECO:0000255" key="2">
    <source>
        <dbReference type="HAMAP-Rule" id="MF_00984"/>
    </source>
</evidence>
<evidence type="ECO:0000256" key="3">
    <source>
        <dbReference type="SAM" id="MobiDB-lite"/>
    </source>
</evidence>
<evidence type="ECO:0000269" key="4">
    <source>
    </source>
</evidence>
<geneLocation type="plasmid">
    <name>pLP231a</name>
</geneLocation>
<feature type="initiator methionine" description="Removed" evidence="1">
    <location>
        <position position="1"/>
    </location>
</feature>
<feature type="chain" id="PRO_0000096040" description="Plasmid-derived single-stranded DNA-binding protein">
    <location>
        <begin position="2"/>
        <end position="179"/>
    </location>
</feature>
<feature type="domain" description="SSB" evidence="2">
    <location>
        <begin position="6"/>
        <end position="110"/>
    </location>
</feature>
<feature type="DNA-binding region" evidence="2">
    <location>
        <begin position="55"/>
        <end position="61"/>
    </location>
</feature>
<feature type="region of interest" description="Disordered" evidence="3">
    <location>
        <begin position="114"/>
        <end position="179"/>
    </location>
</feature>
<feature type="compositionally biased region" description="Polar residues" evidence="3">
    <location>
        <begin position="118"/>
        <end position="132"/>
    </location>
</feature>
<feature type="compositionally biased region" description="Basic residues" evidence="3">
    <location>
        <begin position="145"/>
        <end position="155"/>
    </location>
</feature>
<feature type="compositionally biased region" description="Acidic residues" evidence="3">
    <location>
        <begin position="167"/>
        <end position="179"/>
    </location>
</feature>